<gene>
    <name evidence="1" type="primary">mraZ</name>
    <name type="ordered locus">DICTH_1141</name>
</gene>
<organism>
    <name type="scientific">Dictyoglomus thermophilum (strain ATCC 35947 / DSM 3960 / H-6-12)</name>
    <dbReference type="NCBI Taxonomy" id="309799"/>
    <lineage>
        <taxon>Bacteria</taxon>
        <taxon>Pseudomonadati</taxon>
        <taxon>Dictyoglomota</taxon>
        <taxon>Dictyoglomia</taxon>
        <taxon>Dictyoglomales</taxon>
        <taxon>Dictyoglomaceae</taxon>
        <taxon>Dictyoglomus</taxon>
    </lineage>
</organism>
<sequence>MFVGEYYHSLDEKGRLIIPNDFRQLLGETFYLTRGFERCLNIYTITDWNNFSQIISSFSPTDNLMRKLCRFWFSGSIQVTTDKLGRILIPSFLIEYAELSKEVVIIGAGKHIEIWAKEKWEEFNKEENILENMNEINSKVAELWKK</sequence>
<keyword id="KW-0963">Cytoplasm</keyword>
<keyword id="KW-0238">DNA-binding</keyword>
<keyword id="KW-0677">Repeat</keyword>
<keyword id="KW-0804">Transcription</keyword>
<keyword id="KW-0805">Transcription regulation</keyword>
<feature type="chain" id="PRO_1000134787" description="Transcriptional regulator MraZ">
    <location>
        <begin position="1"/>
        <end position="146"/>
    </location>
</feature>
<feature type="domain" description="SpoVT-AbrB 1" evidence="2">
    <location>
        <begin position="5"/>
        <end position="47"/>
    </location>
</feature>
<feature type="domain" description="SpoVT-AbrB 2" evidence="2">
    <location>
        <begin position="76"/>
        <end position="119"/>
    </location>
</feature>
<accession>B5YEM2</accession>
<proteinExistence type="inferred from homology"/>
<reference key="1">
    <citation type="journal article" date="2014" name="Genome Announc.">
        <title>Complete Genome Sequence of the Extreme Thermophile Dictyoglomus thermophilum H-6-12.</title>
        <authorList>
            <person name="Coil D.A."/>
            <person name="Badger J.H."/>
            <person name="Forberger H.C."/>
            <person name="Riggs F."/>
            <person name="Madupu R."/>
            <person name="Fedorova N."/>
            <person name="Ward N."/>
            <person name="Robb F.T."/>
            <person name="Eisen J.A."/>
        </authorList>
    </citation>
    <scope>NUCLEOTIDE SEQUENCE [LARGE SCALE GENOMIC DNA]</scope>
    <source>
        <strain>ATCC 35947 / DSM 3960 / H-6-12</strain>
    </source>
</reference>
<evidence type="ECO:0000255" key="1">
    <source>
        <dbReference type="HAMAP-Rule" id="MF_01008"/>
    </source>
</evidence>
<evidence type="ECO:0000255" key="2">
    <source>
        <dbReference type="PROSITE-ProRule" id="PRU01076"/>
    </source>
</evidence>
<dbReference type="EMBL" id="CP001146">
    <property type="protein sequence ID" value="ACI18463.1"/>
    <property type="molecule type" value="Genomic_DNA"/>
</dbReference>
<dbReference type="RefSeq" id="WP_012547095.1">
    <property type="nucleotide sequence ID" value="NC_011297.1"/>
</dbReference>
<dbReference type="SMR" id="B5YEM2"/>
<dbReference type="STRING" id="309799.DICTH_1141"/>
<dbReference type="PaxDb" id="309799-DICTH_1141"/>
<dbReference type="KEGG" id="dth:DICTH_1141"/>
<dbReference type="eggNOG" id="COG2001">
    <property type="taxonomic scope" value="Bacteria"/>
</dbReference>
<dbReference type="HOGENOM" id="CLU_107907_0_5_0"/>
<dbReference type="OrthoDB" id="9807753at2"/>
<dbReference type="Proteomes" id="UP000001733">
    <property type="component" value="Chromosome"/>
</dbReference>
<dbReference type="GO" id="GO:0005737">
    <property type="term" value="C:cytoplasm"/>
    <property type="evidence" value="ECO:0007669"/>
    <property type="project" value="UniProtKB-UniRule"/>
</dbReference>
<dbReference type="GO" id="GO:0009295">
    <property type="term" value="C:nucleoid"/>
    <property type="evidence" value="ECO:0007669"/>
    <property type="project" value="UniProtKB-SubCell"/>
</dbReference>
<dbReference type="GO" id="GO:0003700">
    <property type="term" value="F:DNA-binding transcription factor activity"/>
    <property type="evidence" value="ECO:0007669"/>
    <property type="project" value="UniProtKB-UniRule"/>
</dbReference>
<dbReference type="GO" id="GO:0000976">
    <property type="term" value="F:transcription cis-regulatory region binding"/>
    <property type="evidence" value="ECO:0007669"/>
    <property type="project" value="TreeGrafter"/>
</dbReference>
<dbReference type="GO" id="GO:2000143">
    <property type="term" value="P:negative regulation of DNA-templated transcription initiation"/>
    <property type="evidence" value="ECO:0007669"/>
    <property type="project" value="TreeGrafter"/>
</dbReference>
<dbReference type="CDD" id="cd16321">
    <property type="entry name" value="MraZ_C"/>
    <property type="match status" value="1"/>
</dbReference>
<dbReference type="CDD" id="cd16320">
    <property type="entry name" value="MraZ_N"/>
    <property type="match status" value="1"/>
</dbReference>
<dbReference type="FunFam" id="3.40.1550.20:FF:000002">
    <property type="entry name" value="Transcriptional regulator MraZ"/>
    <property type="match status" value="1"/>
</dbReference>
<dbReference type="Gene3D" id="3.40.1550.20">
    <property type="entry name" value="Transcriptional regulator MraZ domain"/>
    <property type="match status" value="1"/>
</dbReference>
<dbReference type="HAMAP" id="MF_01008">
    <property type="entry name" value="MraZ"/>
    <property type="match status" value="1"/>
</dbReference>
<dbReference type="InterPro" id="IPR003444">
    <property type="entry name" value="MraZ"/>
</dbReference>
<dbReference type="InterPro" id="IPR035644">
    <property type="entry name" value="MraZ_C"/>
</dbReference>
<dbReference type="InterPro" id="IPR020603">
    <property type="entry name" value="MraZ_dom"/>
</dbReference>
<dbReference type="InterPro" id="IPR035642">
    <property type="entry name" value="MraZ_N"/>
</dbReference>
<dbReference type="InterPro" id="IPR038619">
    <property type="entry name" value="MraZ_sf"/>
</dbReference>
<dbReference type="InterPro" id="IPR007159">
    <property type="entry name" value="SpoVT-AbrB_dom"/>
</dbReference>
<dbReference type="InterPro" id="IPR037914">
    <property type="entry name" value="SpoVT-AbrB_sf"/>
</dbReference>
<dbReference type="NCBIfam" id="TIGR00242">
    <property type="entry name" value="division/cell wall cluster transcriptional repressor MraZ"/>
    <property type="match status" value="1"/>
</dbReference>
<dbReference type="PANTHER" id="PTHR34701">
    <property type="entry name" value="TRANSCRIPTIONAL REGULATOR MRAZ"/>
    <property type="match status" value="1"/>
</dbReference>
<dbReference type="PANTHER" id="PTHR34701:SF1">
    <property type="entry name" value="TRANSCRIPTIONAL REGULATOR MRAZ"/>
    <property type="match status" value="1"/>
</dbReference>
<dbReference type="Pfam" id="PF02381">
    <property type="entry name" value="MraZ"/>
    <property type="match status" value="2"/>
</dbReference>
<dbReference type="SUPFAM" id="SSF89447">
    <property type="entry name" value="AbrB/MazE/MraZ-like"/>
    <property type="match status" value="1"/>
</dbReference>
<dbReference type="PROSITE" id="PS51740">
    <property type="entry name" value="SPOVT_ABRB"/>
    <property type="match status" value="2"/>
</dbReference>
<protein>
    <recommendedName>
        <fullName>Transcriptional regulator MraZ</fullName>
    </recommendedName>
</protein>
<name>MRAZ_DICT6</name>
<comment type="subunit">
    <text evidence="1">Forms oligomers.</text>
</comment>
<comment type="subcellular location">
    <subcellularLocation>
        <location evidence="1">Cytoplasm</location>
        <location evidence="1">Nucleoid</location>
    </subcellularLocation>
</comment>
<comment type="similarity">
    <text evidence="1">Belongs to the MraZ family.</text>
</comment>